<protein>
    <recommendedName>
        <fullName evidence="1">DNA repair protein RadA</fullName>
        <ecNumber evidence="1">3.6.4.-</ecNumber>
    </recommendedName>
    <alternativeName>
        <fullName evidence="1">Branch migration protein RadA</fullName>
    </alternativeName>
</protein>
<dbReference type="EC" id="3.6.4.-" evidence="1"/>
<dbReference type="EMBL" id="U89384">
    <property type="protein sequence ID" value="AAB49466.1"/>
    <property type="molecule type" value="Genomic_DNA"/>
</dbReference>
<dbReference type="EMBL" id="AE004091">
    <property type="protein sequence ID" value="AAG07997.1"/>
    <property type="molecule type" value="Genomic_DNA"/>
</dbReference>
<dbReference type="PIR" id="A83069">
    <property type="entry name" value="A83069"/>
</dbReference>
<dbReference type="RefSeq" id="NP_253299.1">
    <property type="nucleotide sequence ID" value="NC_002516.2"/>
</dbReference>
<dbReference type="RefSeq" id="WP_003094867.1">
    <property type="nucleotide sequence ID" value="NZ_QZGE01000004.1"/>
</dbReference>
<dbReference type="SMR" id="P96963"/>
<dbReference type="FunCoup" id="P96963">
    <property type="interactions" value="410"/>
</dbReference>
<dbReference type="STRING" id="208964.PA4609"/>
<dbReference type="PaxDb" id="208964-PA4609"/>
<dbReference type="GeneID" id="881107"/>
<dbReference type="KEGG" id="pae:PA4609"/>
<dbReference type="PATRIC" id="fig|208964.12.peg.4824"/>
<dbReference type="PseudoCAP" id="PA4609"/>
<dbReference type="HOGENOM" id="CLU_018264_0_1_6"/>
<dbReference type="InParanoid" id="P96963"/>
<dbReference type="OrthoDB" id="9803906at2"/>
<dbReference type="PhylomeDB" id="P96963"/>
<dbReference type="BioCyc" id="PAER208964:G1FZ6-4703-MONOMER"/>
<dbReference type="Proteomes" id="UP000002438">
    <property type="component" value="Chromosome"/>
</dbReference>
<dbReference type="GO" id="GO:0005524">
    <property type="term" value="F:ATP binding"/>
    <property type="evidence" value="ECO:0007669"/>
    <property type="project" value="UniProtKB-UniRule"/>
</dbReference>
<dbReference type="GO" id="GO:0016887">
    <property type="term" value="F:ATP hydrolysis activity"/>
    <property type="evidence" value="ECO:0007669"/>
    <property type="project" value="InterPro"/>
</dbReference>
<dbReference type="GO" id="GO:0140664">
    <property type="term" value="F:ATP-dependent DNA damage sensor activity"/>
    <property type="evidence" value="ECO:0007669"/>
    <property type="project" value="InterPro"/>
</dbReference>
<dbReference type="GO" id="GO:0003684">
    <property type="term" value="F:damaged DNA binding"/>
    <property type="evidence" value="ECO:0007669"/>
    <property type="project" value="InterPro"/>
</dbReference>
<dbReference type="GO" id="GO:0008270">
    <property type="term" value="F:zinc ion binding"/>
    <property type="evidence" value="ECO:0007669"/>
    <property type="project" value="UniProtKB-KW"/>
</dbReference>
<dbReference type="GO" id="GO:0000725">
    <property type="term" value="P:recombinational repair"/>
    <property type="evidence" value="ECO:0000318"/>
    <property type="project" value="GO_Central"/>
</dbReference>
<dbReference type="CDD" id="cd01121">
    <property type="entry name" value="RadA_SMS_N"/>
    <property type="match status" value="1"/>
</dbReference>
<dbReference type="FunFam" id="3.30.230.10:FF:000011">
    <property type="entry name" value="DNA repair protein RadA"/>
    <property type="match status" value="1"/>
</dbReference>
<dbReference type="FunFam" id="3.40.50.300:FF:000050">
    <property type="entry name" value="DNA repair protein RadA"/>
    <property type="match status" value="1"/>
</dbReference>
<dbReference type="Gene3D" id="3.30.230.10">
    <property type="match status" value="1"/>
</dbReference>
<dbReference type="Gene3D" id="3.40.50.300">
    <property type="entry name" value="P-loop containing nucleotide triphosphate hydrolases"/>
    <property type="match status" value="1"/>
</dbReference>
<dbReference type="HAMAP" id="MF_01498">
    <property type="entry name" value="RadA_bact"/>
    <property type="match status" value="1"/>
</dbReference>
<dbReference type="InterPro" id="IPR003593">
    <property type="entry name" value="AAA+_ATPase"/>
</dbReference>
<dbReference type="InterPro" id="IPR004504">
    <property type="entry name" value="DNA_repair_RadA"/>
</dbReference>
<dbReference type="InterPro" id="IPR027417">
    <property type="entry name" value="P-loop_NTPase"/>
</dbReference>
<dbReference type="InterPro" id="IPR020588">
    <property type="entry name" value="RecA_ATP-bd"/>
</dbReference>
<dbReference type="InterPro" id="IPR020568">
    <property type="entry name" value="Ribosomal_Su5_D2-typ_SF"/>
</dbReference>
<dbReference type="InterPro" id="IPR014721">
    <property type="entry name" value="Ribsml_uS5_D2-typ_fold_subgr"/>
</dbReference>
<dbReference type="InterPro" id="IPR041166">
    <property type="entry name" value="Rubredoxin_2"/>
</dbReference>
<dbReference type="NCBIfam" id="TIGR00416">
    <property type="entry name" value="sms"/>
    <property type="match status" value="1"/>
</dbReference>
<dbReference type="PANTHER" id="PTHR32472">
    <property type="entry name" value="DNA REPAIR PROTEIN RADA"/>
    <property type="match status" value="1"/>
</dbReference>
<dbReference type="PANTHER" id="PTHR32472:SF10">
    <property type="entry name" value="DNA REPAIR PROTEIN RADA-LIKE PROTEIN"/>
    <property type="match status" value="1"/>
</dbReference>
<dbReference type="Pfam" id="PF13481">
    <property type="entry name" value="AAA_25"/>
    <property type="match status" value="1"/>
</dbReference>
<dbReference type="Pfam" id="PF13541">
    <property type="entry name" value="ChlI"/>
    <property type="match status" value="1"/>
</dbReference>
<dbReference type="Pfam" id="PF18073">
    <property type="entry name" value="Zn_ribbon_LapB"/>
    <property type="match status" value="1"/>
</dbReference>
<dbReference type="PRINTS" id="PR01874">
    <property type="entry name" value="DNAREPAIRADA"/>
</dbReference>
<dbReference type="SMART" id="SM00382">
    <property type="entry name" value="AAA"/>
    <property type="match status" value="1"/>
</dbReference>
<dbReference type="SUPFAM" id="SSF52540">
    <property type="entry name" value="P-loop containing nucleoside triphosphate hydrolases"/>
    <property type="match status" value="1"/>
</dbReference>
<dbReference type="SUPFAM" id="SSF54211">
    <property type="entry name" value="Ribosomal protein S5 domain 2-like"/>
    <property type="match status" value="1"/>
</dbReference>
<dbReference type="PROSITE" id="PS50162">
    <property type="entry name" value="RECA_2"/>
    <property type="match status" value="1"/>
</dbReference>
<evidence type="ECO:0000255" key="1">
    <source>
        <dbReference type="HAMAP-Rule" id="MF_01498"/>
    </source>
</evidence>
<evidence type="ECO:0000305" key="2"/>
<reference key="1">
    <citation type="submission" date="1997-03" db="EMBL/GenBank/DDBJ databases">
        <title>Pseudomonas aeruginosa oxidative stress operon.</title>
        <authorList>
            <person name="Howell M.L."/>
            <person name="Heur M."/>
            <person name="Klotz M.G."/>
            <person name="Hassett D.J."/>
        </authorList>
    </citation>
    <scope>NUCLEOTIDE SEQUENCE [GENOMIC DNA]</scope>
    <source>
        <strain>FRD1</strain>
    </source>
</reference>
<reference key="2">
    <citation type="journal article" date="2000" name="Nature">
        <title>Complete genome sequence of Pseudomonas aeruginosa PAO1, an opportunistic pathogen.</title>
        <authorList>
            <person name="Stover C.K."/>
            <person name="Pham X.-Q.T."/>
            <person name="Erwin A.L."/>
            <person name="Mizoguchi S.D."/>
            <person name="Warrener P."/>
            <person name="Hickey M.J."/>
            <person name="Brinkman F.S.L."/>
            <person name="Hufnagle W.O."/>
            <person name="Kowalik D.J."/>
            <person name="Lagrou M."/>
            <person name="Garber R.L."/>
            <person name="Goltry L."/>
            <person name="Tolentino E."/>
            <person name="Westbrock-Wadman S."/>
            <person name="Yuan Y."/>
            <person name="Brody L.L."/>
            <person name="Coulter S.N."/>
            <person name="Folger K.R."/>
            <person name="Kas A."/>
            <person name="Larbig K."/>
            <person name="Lim R.M."/>
            <person name="Smith K.A."/>
            <person name="Spencer D.H."/>
            <person name="Wong G.K.-S."/>
            <person name="Wu Z."/>
            <person name="Paulsen I.T."/>
            <person name="Reizer J."/>
            <person name="Saier M.H. Jr."/>
            <person name="Hancock R.E.W."/>
            <person name="Lory S."/>
            <person name="Olson M.V."/>
        </authorList>
    </citation>
    <scope>NUCLEOTIDE SEQUENCE [LARGE SCALE GENOMIC DNA]</scope>
    <source>
        <strain>ATCC 15692 / DSM 22644 / CIP 104116 / JCM 14847 / LMG 12228 / 1C / PRS 101 / PAO1</strain>
    </source>
</reference>
<organism>
    <name type="scientific">Pseudomonas aeruginosa (strain ATCC 15692 / DSM 22644 / CIP 104116 / JCM 14847 / LMG 12228 / 1C / PRS 101 / PAO1)</name>
    <dbReference type="NCBI Taxonomy" id="208964"/>
    <lineage>
        <taxon>Bacteria</taxon>
        <taxon>Pseudomonadati</taxon>
        <taxon>Pseudomonadota</taxon>
        <taxon>Gammaproteobacteria</taxon>
        <taxon>Pseudomonadales</taxon>
        <taxon>Pseudomonadaceae</taxon>
        <taxon>Pseudomonas</taxon>
    </lineage>
</organism>
<keyword id="KW-0067">ATP-binding</keyword>
<keyword id="KW-0227">DNA damage</keyword>
<keyword id="KW-0234">DNA repair</keyword>
<keyword id="KW-0238">DNA-binding</keyword>
<keyword id="KW-0378">Hydrolase</keyword>
<keyword id="KW-0479">Metal-binding</keyword>
<keyword id="KW-0547">Nucleotide-binding</keyword>
<keyword id="KW-1185">Reference proteome</keyword>
<keyword id="KW-0346">Stress response</keyword>
<keyword id="KW-0862">Zinc</keyword>
<keyword id="KW-0863">Zinc-finger</keyword>
<gene>
    <name evidence="1" type="primary">radA</name>
    <name type="ordered locus">PA4609</name>
</gene>
<feature type="chain" id="PRO_0000187934" description="DNA repair protein RadA">
    <location>
        <begin position="1"/>
        <end position="453"/>
    </location>
</feature>
<feature type="zinc finger region" description="C4-type" evidence="1">
    <location>
        <begin position="10"/>
        <end position="27"/>
    </location>
</feature>
<feature type="region of interest" description="Lon-protease-like" evidence="1">
    <location>
        <begin position="351"/>
        <end position="453"/>
    </location>
</feature>
<feature type="short sequence motif" description="RadA KNRFG motif" evidence="1">
    <location>
        <begin position="252"/>
        <end position="256"/>
    </location>
</feature>
<feature type="binding site" evidence="1">
    <location>
        <begin position="96"/>
        <end position="103"/>
    </location>
    <ligand>
        <name>ATP</name>
        <dbReference type="ChEBI" id="CHEBI:30616"/>
    </ligand>
</feature>
<feature type="sequence conflict" description="In Ref. 1; AAB49466." evidence="2" ref="1">
    <original>E</original>
    <variation>K</variation>
    <location>
        <position position="142"/>
    </location>
</feature>
<feature type="sequence conflict" description="In Ref. 1; AAB49466." evidence="2" ref="1">
    <original>E</original>
    <variation>D</variation>
    <location>
        <position position="240"/>
    </location>
</feature>
<feature type="sequence conflict" description="In Ref. 1; AAB49466." evidence="2" ref="1">
    <original>GR</original>
    <variation>AA</variation>
    <location>
        <begin position="243"/>
        <end position="244"/>
    </location>
</feature>
<feature type="sequence conflict" description="In Ref. 1; AAB49466." evidence="2" ref="1">
    <original>L</original>
    <variation>M</variation>
    <location>
        <position position="247"/>
    </location>
</feature>
<feature type="sequence conflict" description="In Ref. 1; AAB49466." evidence="2" ref="1">
    <original>V</original>
    <variation>F</variation>
    <location>
        <position position="258"/>
    </location>
</feature>
<comment type="function">
    <text evidence="1">DNA-dependent ATPase involved in processing of recombination intermediates, plays a role in repairing DNA breaks. Stimulates the branch migration of RecA-mediated strand transfer reactions, allowing the 3' invading strand to extend heteroduplex DNA faster. Binds ssDNA in the presence of ADP but not other nucleotides, has ATPase activity that is stimulated by ssDNA and various branched DNA structures, but inhibited by SSB. Does not have RecA's homology-searching function.</text>
</comment>
<comment type="domain">
    <text evidence="1">Has a putative N-terminal zinc-finger, a middle region with homology to RecA with ATPase motifs including the RadA KNRFG motif, while the C-terminus is homologous to Lon protease.</text>
</comment>
<comment type="similarity">
    <text evidence="1">Belongs to the RecA family. RadA subfamily.</text>
</comment>
<proteinExistence type="inferred from homology"/>
<name>RADA_PSEAE</name>
<accession>P96963</accession>
<sequence length="453" mass="48411">MAKAKRMYGCTECGATFPKWAGQCADCGAWNTLVETVVEAAPSGSGRGGWAGQQANLKTLAEVSVEEMPRFTTGSTELDRVLGGGLVDGSVVLIGGDPGIGKSTILLQTLCNLASRVPALYVTGEESQQQVAMRARRLSLPEDKLKVMTETSIETIIATARQEQPRVMVIDSIQTIFTEQLQSAPGGVAQVRESAAMLVRYAKQSGTAIFLVGHVTKEGALAGPRVLEHMVDTVLYFEGESDGRLRLLRAVKNRFGAVNELGVFGMTDKGLKEVSNPSAIFLTRAQEAVPGSVVMATWEGSRPMLVEVQALVDTSHLANPRRVTLGLDQNRLAMLLAVLHRHGGIPTYDQDVFLNVVGGVKVLETASDLALMAAVMSSLRNRPLPHDLLVFGEVGLSGEVRPVPSGQERLKEAGKHGFKRAIVPLGNAPKEAPAGLQVIAVTRLEQALDALFE</sequence>